<accession>Q145L1</accession>
<feature type="chain" id="PRO_0000257267" description="Ribosomal RNA small subunit methyltransferase A">
    <location>
        <begin position="1"/>
        <end position="277"/>
    </location>
</feature>
<feature type="binding site" evidence="1">
    <location>
        <position position="23"/>
    </location>
    <ligand>
        <name>S-adenosyl-L-methionine</name>
        <dbReference type="ChEBI" id="CHEBI:59789"/>
    </ligand>
</feature>
<feature type="binding site" evidence="1">
    <location>
        <position position="25"/>
    </location>
    <ligand>
        <name>S-adenosyl-L-methionine</name>
        <dbReference type="ChEBI" id="CHEBI:59789"/>
    </ligand>
</feature>
<feature type="binding site" evidence="1">
    <location>
        <position position="50"/>
    </location>
    <ligand>
        <name>S-adenosyl-L-methionine</name>
        <dbReference type="ChEBI" id="CHEBI:59789"/>
    </ligand>
</feature>
<feature type="binding site" evidence="1">
    <location>
        <position position="75"/>
    </location>
    <ligand>
        <name>S-adenosyl-L-methionine</name>
        <dbReference type="ChEBI" id="CHEBI:59789"/>
    </ligand>
</feature>
<feature type="binding site" evidence="1">
    <location>
        <position position="98"/>
    </location>
    <ligand>
        <name>S-adenosyl-L-methionine</name>
        <dbReference type="ChEBI" id="CHEBI:59789"/>
    </ligand>
</feature>
<feature type="binding site" evidence="1">
    <location>
        <position position="121"/>
    </location>
    <ligand>
        <name>S-adenosyl-L-methionine</name>
        <dbReference type="ChEBI" id="CHEBI:59789"/>
    </ligand>
</feature>
<comment type="function">
    <text evidence="1">Specifically dimethylates two adjacent adenosines (A1518 and A1519) in the loop of a conserved hairpin near the 3'-end of 16S rRNA in the 30S particle. May play a critical role in biogenesis of 30S subunits.</text>
</comment>
<comment type="catalytic activity">
    <reaction evidence="1">
        <text>adenosine(1518)/adenosine(1519) in 16S rRNA + 4 S-adenosyl-L-methionine = N(6)-dimethyladenosine(1518)/N(6)-dimethyladenosine(1519) in 16S rRNA + 4 S-adenosyl-L-homocysteine + 4 H(+)</text>
        <dbReference type="Rhea" id="RHEA:19609"/>
        <dbReference type="Rhea" id="RHEA-COMP:10232"/>
        <dbReference type="Rhea" id="RHEA-COMP:10233"/>
        <dbReference type="ChEBI" id="CHEBI:15378"/>
        <dbReference type="ChEBI" id="CHEBI:57856"/>
        <dbReference type="ChEBI" id="CHEBI:59789"/>
        <dbReference type="ChEBI" id="CHEBI:74411"/>
        <dbReference type="ChEBI" id="CHEBI:74493"/>
        <dbReference type="EC" id="2.1.1.182"/>
    </reaction>
</comment>
<comment type="subcellular location">
    <subcellularLocation>
        <location evidence="1">Cytoplasm</location>
    </subcellularLocation>
</comment>
<comment type="similarity">
    <text evidence="1">Belongs to the class I-like SAM-binding methyltransferase superfamily. rRNA adenine N(6)-methyltransferase family. RsmA subfamily.</text>
</comment>
<keyword id="KW-0963">Cytoplasm</keyword>
<keyword id="KW-0489">Methyltransferase</keyword>
<keyword id="KW-1185">Reference proteome</keyword>
<keyword id="KW-0694">RNA-binding</keyword>
<keyword id="KW-0698">rRNA processing</keyword>
<keyword id="KW-0949">S-adenosyl-L-methionine</keyword>
<keyword id="KW-0808">Transferase</keyword>
<dbReference type="EC" id="2.1.1.182" evidence="1"/>
<dbReference type="EMBL" id="CP000270">
    <property type="protein sequence ID" value="ABE28978.1"/>
    <property type="molecule type" value="Genomic_DNA"/>
</dbReference>
<dbReference type="RefSeq" id="WP_011486804.1">
    <property type="nucleotide sequence ID" value="NC_007951.1"/>
</dbReference>
<dbReference type="SMR" id="Q145L1"/>
<dbReference type="STRING" id="266265.Bxe_A4021"/>
<dbReference type="KEGG" id="bxb:DR64_1698"/>
<dbReference type="KEGG" id="bxe:Bxe_A4021"/>
<dbReference type="PATRIC" id="fig|266265.5.peg.464"/>
<dbReference type="eggNOG" id="COG0030">
    <property type="taxonomic scope" value="Bacteria"/>
</dbReference>
<dbReference type="OrthoDB" id="9814755at2"/>
<dbReference type="Proteomes" id="UP000001817">
    <property type="component" value="Chromosome 1"/>
</dbReference>
<dbReference type="GO" id="GO:0005829">
    <property type="term" value="C:cytosol"/>
    <property type="evidence" value="ECO:0007669"/>
    <property type="project" value="TreeGrafter"/>
</dbReference>
<dbReference type="GO" id="GO:0052908">
    <property type="term" value="F:16S rRNA (adenine(1518)-N(6)/adenine(1519)-N(6))-dimethyltransferase activity"/>
    <property type="evidence" value="ECO:0007669"/>
    <property type="project" value="UniProtKB-EC"/>
</dbReference>
<dbReference type="GO" id="GO:0003723">
    <property type="term" value="F:RNA binding"/>
    <property type="evidence" value="ECO:0007669"/>
    <property type="project" value="UniProtKB-KW"/>
</dbReference>
<dbReference type="FunFam" id="1.10.8.100:FF:000001">
    <property type="entry name" value="Ribosomal RNA small subunit methyltransferase A"/>
    <property type="match status" value="1"/>
</dbReference>
<dbReference type="Gene3D" id="1.10.8.100">
    <property type="entry name" value="Ribosomal RNA adenine dimethylase-like, domain 2"/>
    <property type="match status" value="1"/>
</dbReference>
<dbReference type="Gene3D" id="3.40.50.150">
    <property type="entry name" value="Vaccinia Virus protein VP39"/>
    <property type="match status" value="1"/>
</dbReference>
<dbReference type="HAMAP" id="MF_00607">
    <property type="entry name" value="16SrRNA_methyltr_A"/>
    <property type="match status" value="1"/>
</dbReference>
<dbReference type="InterPro" id="IPR001737">
    <property type="entry name" value="KsgA/Erm"/>
</dbReference>
<dbReference type="InterPro" id="IPR023165">
    <property type="entry name" value="rRNA_Ade_diMease-like_C"/>
</dbReference>
<dbReference type="InterPro" id="IPR020598">
    <property type="entry name" value="rRNA_Ade_methylase_Trfase_N"/>
</dbReference>
<dbReference type="InterPro" id="IPR011530">
    <property type="entry name" value="rRNA_adenine_dimethylase"/>
</dbReference>
<dbReference type="InterPro" id="IPR029063">
    <property type="entry name" value="SAM-dependent_MTases_sf"/>
</dbReference>
<dbReference type="NCBIfam" id="TIGR00755">
    <property type="entry name" value="ksgA"/>
    <property type="match status" value="1"/>
</dbReference>
<dbReference type="PANTHER" id="PTHR11727">
    <property type="entry name" value="DIMETHYLADENOSINE TRANSFERASE"/>
    <property type="match status" value="1"/>
</dbReference>
<dbReference type="PANTHER" id="PTHR11727:SF7">
    <property type="entry name" value="DIMETHYLADENOSINE TRANSFERASE-RELATED"/>
    <property type="match status" value="1"/>
</dbReference>
<dbReference type="Pfam" id="PF00398">
    <property type="entry name" value="RrnaAD"/>
    <property type="match status" value="1"/>
</dbReference>
<dbReference type="SMART" id="SM00650">
    <property type="entry name" value="rADc"/>
    <property type="match status" value="1"/>
</dbReference>
<dbReference type="SUPFAM" id="SSF53335">
    <property type="entry name" value="S-adenosyl-L-methionine-dependent methyltransferases"/>
    <property type="match status" value="1"/>
</dbReference>
<dbReference type="PROSITE" id="PS51689">
    <property type="entry name" value="SAM_RNA_A_N6_MT"/>
    <property type="match status" value="1"/>
</dbReference>
<proteinExistence type="inferred from homology"/>
<protein>
    <recommendedName>
        <fullName evidence="1">Ribosomal RNA small subunit methyltransferase A</fullName>
        <ecNumber evidence="1">2.1.1.182</ecNumber>
    </recommendedName>
    <alternativeName>
        <fullName evidence="1">16S rRNA (adenine(1518)-N(6)/adenine(1519)-N(6))-dimethyltransferase</fullName>
    </alternativeName>
    <alternativeName>
        <fullName evidence="1">16S rRNA dimethyladenosine transferase</fullName>
    </alternativeName>
    <alternativeName>
        <fullName evidence="1">16S rRNA dimethylase</fullName>
    </alternativeName>
    <alternativeName>
        <fullName evidence="1">S-adenosylmethionine-6-N', N'-adenosyl(rRNA) dimethyltransferase</fullName>
    </alternativeName>
</protein>
<organism>
    <name type="scientific">Paraburkholderia xenovorans (strain LB400)</name>
    <dbReference type="NCBI Taxonomy" id="266265"/>
    <lineage>
        <taxon>Bacteria</taxon>
        <taxon>Pseudomonadati</taxon>
        <taxon>Pseudomonadota</taxon>
        <taxon>Betaproteobacteria</taxon>
        <taxon>Burkholderiales</taxon>
        <taxon>Burkholderiaceae</taxon>
        <taxon>Paraburkholderia</taxon>
    </lineage>
</organism>
<gene>
    <name evidence="1" type="primary">rsmA</name>
    <name evidence="1" type="synonym">ksgA</name>
    <name type="ordered locus">Bxeno_A0440</name>
    <name type="ORF">Bxe_A4021</name>
</gene>
<evidence type="ECO:0000255" key="1">
    <source>
        <dbReference type="HAMAP-Rule" id="MF_00607"/>
    </source>
</evidence>
<reference key="1">
    <citation type="journal article" date="2006" name="Proc. Natl. Acad. Sci. U.S.A.">
        <title>Burkholderia xenovorans LB400 harbors a multi-replicon, 9.73-Mbp genome shaped for versatility.</title>
        <authorList>
            <person name="Chain P.S.G."/>
            <person name="Denef V.J."/>
            <person name="Konstantinidis K.T."/>
            <person name="Vergez L.M."/>
            <person name="Agullo L."/>
            <person name="Reyes V.L."/>
            <person name="Hauser L."/>
            <person name="Cordova M."/>
            <person name="Gomez L."/>
            <person name="Gonzalez M."/>
            <person name="Land M."/>
            <person name="Lao V."/>
            <person name="Larimer F."/>
            <person name="LiPuma J.J."/>
            <person name="Mahenthiralingam E."/>
            <person name="Malfatti S.A."/>
            <person name="Marx C.J."/>
            <person name="Parnell J.J."/>
            <person name="Ramette A."/>
            <person name="Richardson P."/>
            <person name="Seeger M."/>
            <person name="Smith D."/>
            <person name="Spilker T."/>
            <person name="Sul W.J."/>
            <person name="Tsoi T.V."/>
            <person name="Ulrich L.E."/>
            <person name="Zhulin I.B."/>
            <person name="Tiedje J.M."/>
        </authorList>
    </citation>
    <scope>NUCLEOTIDE SEQUENCE [LARGE SCALE GENOMIC DNA]</scope>
    <source>
        <strain>LB400</strain>
    </source>
</reference>
<name>RSMA_PARXL</name>
<sequence>MSTSRQQQGRHQGHIARKRFGQNFLVDMGVIDSIVDVIRPQRGERMVEIGPGLGALTEPLIERLATPEAPLHAVELDRDLIGRLKTKFGDLLELHAGDALAFDFGSLAAPGDKASLRIVGNLPYNISSPLLFHLTAFAHCVIDQHFMLQNEVVERMVAEPGTKAFSRLSVMLQYRYVIDKQLDVPPEAFNPPPKVDSAIVRMIPYELHELPPVDERVLGELVTAAFSQRRKMLRNTLAAYRDSVDFEGLGFDLQRRAEDVPVAEYVRVAQIVAASKA</sequence>